<comment type="function">
    <text evidence="1">This enzyme is involved in nucleotide metabolism: it produces dUMP, the immediate precursor of thymidine nucleotides and it decreases the intracellular concentration of dUTP so that uracil cannot be incorporated into DNA.</text>
</comment>
<comment type="catalytic activity">
    <reaction evidence="1">
        <text>dUTP + H2O = dUMP + diphosphate + H(+)</text>
        <dbReference type="Rhea" id="RHEA:10248"/>
        <dbReference type="ChEBI" id="CHEBI:15377"/>
        <dbReference type="ChEBI" id="CHEBI:15378"/>
        <dbReference type="ChEBI" id="CHEBI:33019"/>
        <dbReference type="ChEBI" id="CHEBI:61555"/>
        <dbReference type="ChEBI" id="CHEBI:246422"/>
        <dbReference type="EC" id="3.6.1.23"/>
    </reaction>
</comment>
<comment type="cofactor">
    <cofactor evidence="1">
        <name>Mg(2+)</name>
        <dbReference type="ChEBI" id="CHEBI:18420"/>
    </cofactor>
</comment>
<comment type="pathway">
    <text evidence="1">Pyrimidine metabolism; dUMP biosynthesis; dUMP from dCTP (dUTP route): step 2/2.</text>
</comment>
<comment type="similarity">
    <text evidence="1">Belongs to the dUTPase family.</text>
</comment>
<protein>
    <recommendedName>
        <fullName evidence="1">Deoxyuridine 5'-triphosphate nucleotidohydrolase</fullName>
        <shortName evidence="1">dUTPase</shortName>
        <ecNumber evidence="1">3.6.1.23</ecNumber>
    </recommendedName>
    <alternativeName>
        <fullName evidence="1">dUTP pyrophosphatase</fullName>
    </alternativeName>
</protein>
<sequence>MKKIDVKILDRRICDRFPLPAYATTGSAGLDLRACIDEPMVLAPGETTLIPTGLAIHIADANLAAVILPRSGLGHKHGIVLGNLVGLIDSDYQGPLMVSVWNRGQDIFTIEPGERMAQMVFVPVVQAEFNLVESFDTSERGEGGFGHSGRQ</sequence>
<reference key="1">
    <citation type="journal article" date="2006" name="Genome Res.">
        <title>Massive genome erosion and functional adaptations provide insights into the symbiotic lifestyle of Sodalis glossinidius in the tsetse host.</title>
        <authorList>
            <person name="Toh H."/>
            <person name="Weiss B.L."/>
            <person name="Perkin S.A.H."/>
            <person name="Yamashita A."/>
            <person name="Oshima K."/>
            <person name="Hattori M."/>
            <person name="Aksoy S."/>
        </authorList>
    </citation>
    <scope>NUCLEOTIDE SEQUENCE [LARGE SCALE GENOMIC DNA]</scope>
    <source>
        <strain>morsitans</strain>
    </source>
</reference>
<proteinExistence type="inferred from homology"/>
<accession>Q2NQU0</accession>
<feature type="chain" id="PRO_1000076074" description="Deoxyuridine 5'-triphosphate nucleotidohydrolase">
    <location>
        <begin position="1"/>
        <end position="151"/>
    </location>
</feature>
<feature type="binding site" evidence="1">
    <location>
        <begin position="70"/>
        <end position="72"/>
    </location>
    <ligand>
        <name>substrate</name>
    </ligand>
</feature>
<feature type="binding site" evidence="1">
    <location>
        <position position="83"/>
    </location>
    <ligand>
        <name>substrate</name>
    </ligand>
</feature>
<feature type="binding site" evidence="1">
    <location>
        <begin position="87"/>
        <end position="89"/>
    </location>
    <ligand>
        <name>substrate</name>
    </ligand>
</feature>
<feature type="binding site" evidence="1">
    <location>
        <position position="97"/>
    </location>
    <ligand>
        <name>substrate</name>
    </ligand>
</feature>
<keyword id="KW-0378">Hydrolase</keyword>
<keyword id="KW-0460">Magnesium</keyword>
<keyword id="KW-0479">Metal-binding</keyword>
<keyword id="KW-0546">Nucleotide metabolism</keyword>
<gene>
    <name evidence="1" type="primary">dut</name>
    <name type="ordered locus">SG2210</name>
</gene>
<name>DUT_SODGM</name>
<organism>
    <name type="scientific">Sodalis glossinidius (strain morsitans)</name>
    <dbReference type="NCBI Taxonomy" id="343509"/>
    <lineage>
        <taxon>Bacteria</taxon>
        <taxon>Pseudomonadati</taxon>
        <taxon>Pseudomonadota</taxon>
        <taxon>Gammaproteobacteria</taxon>
        <taxon>Enterobacterales</taxon>
        <taxon>Bruguierivoracaceae</taxon>
        <taxon>Sodalis</taxon>
    </lineage>
</organism>
<dbReference type="EC" id="3.6.1.23" evidence="1"/>
<dbReference type="EMBL" id="AP008232">
    <property type="protein sequence ID" value="BAE75485.1"/>
    <property type="molecule type" value="Genomic_DNA"/>
</dbReference>
<dbReference type="SMR" id="Q2NQU0"/>
<dbReference type="STRING" id="343509.SG2210"/>
<dbReference type="KEGG" id="sgl:SG2210"/>
<dbReference type="eggNOG" id="COG0756">
    <property type="taxonomic scope" value="Bacteria"/>
</dbReference>
<dbReference type="HOGENOM" id="CLU_068508_1_1_6"/>
<dbReference type="UniPathway" id="UPA00610">
    <property type="reaction ID" value="UER00666"/>
</dbReference>
<dbReference type="Proteomes" id="UP000001932">
    <property type="component" value="Chromosome"/>
</dbReference>
<dbReference type="GO" id="GO:0004170">
    <property type="term" value="F:dUTP diphosphatase activity"/>
    <property type="evidence" value="ECO:0007669"/>
    <property type="project" value="UniProtKB-UniRule"/>
</dbReference>
<dbReference type="GO" id="GO:0000287">
    <property type="term" value="F:magnesium ion binding"/>
    <property type="evidence" value="ECO:0007669"/>
    <property type="project" value="UniProtKB-UniRule"/>
</dbReference>
<dbReference type="GO" id="GO:0006226">
    <property type="term" value="P:dUMP biosynthetic process"/>
    <property type="evidence" value="ECO:0007669"/>
    <property type="project" value="UniProtKB-UniRule"/>
</dbReference>
<dbReference type="GO" id="GO:0046081">
    <property type="term" value="P:dUTP catabolic process"/>
    <property type="evidence" value="ECO:0007669"/>
    <property type="project" value="InterPro"/>
</dbReference>
<dbReference type="CDD" id="cd07557">
    <property type="entry name" value="trimeric_dUTPase"/>
    <property type="match status" value="1"/>
</dbReference>
<dbReference type="FunFam" id="2.70.40.10:FF:000002">
    <property type="entry name" value="dUTP diphosphatase"/>
    <property type="match status" value="1"/>
</dbReference>
<dbReference type="Gene3D" id="2.70.40.10">
    <property type="match status" value="1"/>
</dbReference>
<dbReference type="HAMAP" id="MF_00116">
    <property type="entry name" value="dUTPase_bact"/>
    <property type="match status" value="1"/>
</dbReference>
<dbReference type="InterPro" id="IPR008181">
    <property type="entry name" value="dUTPase"/>
</dbReference>
<dbReference type="InterPro" id="IPR029054">
    <property type="entry name" value="dUTPase-like"/>
</dbReference>
<dbReference type="InterPro" id="IPR036157">
    <property type="entry name" value="dUTPase-like_sf"/>
</dbReference>
<dbReference type="InterPro" id="IPR033704">
    <property type="entry name" value="dUTPase_trimeric"/>
</dbReference>
<dbReference type="NCBIfam" id="TIGR00576">
    <property type="entry name" value="dut"/>
    <property type="match status" value="1"/>
</dbReference>
<dbReference type="NCBIfam" id="NF001862">
    <property type="entry name" value="PRK00601.1"/>
    <property type="match status" value="1"/>
</dbReference>
<dbReference type="PANTHER" id="PTHR11241">
    <property type="entry name" value="DEOXYURIDINE 5'-TRIPHOSPHATE NUCLEOTIDOHYDROLASE"/>
    <property type="match status" value="1"/>
</dbReference>
<dbReference type="PANTHER" id="PTHR11241:SF0">
    <property type="entry name" value="DEOXYURIDINE 5'-TRIPHOSPHATE NUCLEOTIDOHYDROLASE"/>
    <property type="match status" value="1"/>
</dbReference>
<dbReference type="Pfam" id="PF00692">
    <property type="entry name" value="dUTPase"/>
    <property type="match status" value="1"/>
</dbReference>
<dbReference type="SUPFAM" id="SSF51283">
    <property type="entry name" value="dUTPase-like"/>
    <property type="match status" value="1"/>
</dbReference>
<evidence type="ECO:0000255" key="1">
    <source>
        <dbReference type="HAMAP-Rule" id="MF_00116"/>
    </source>
</evidence>